<evidence type="ECO:0000250" key="1"/>
<evidence type="ECO:0000255" key="2"/>
<evidence type="ECO:0000255" key="3">
    <source>
        <dbReference type="PROSITE-ProRule" id="PRU00274"/>
    </source>
</evidence>
<evidence type="ECO:0000305" key="4"/>
<accession>P42279</accession>
<accession>Q6NLM5</accession>
<accession>Q9V5X9</accession>
<feature type="signal peptide" evidence="2">
    <location>
        <begin position="1"/>
        <end position="22"/>
    </location>
</feature>
<feature type="propeptide" id="PRO_0000028283" description="Activation peptide">
    <location>
        <begin position="23"/>
        <end position="27"/>
    </location>
</feature>
<feature type="chain" id="PRO_0000028284" description="Trypsin eta">
    <location>
        <begin position="28"/>
        <end position="262"/>
    </location>
</feature>
<feature type="domain" description="Peptidase S1" evidence="3">
    <location>
        <begin position="28"/>
        <end position="259"/>
    </location>
</feature>
<feature type="active site" description="Charge relay system" evidence="1">
    <location>
        <position position="74"/>
    </location>
</feature>
<feature type="active site" description="Charge relay system" evidence="1">
    <location>
        <position position="120"/>
    </location>
</feature>
<feature type="active site" description="Charge relay system" evidence="1">
    <location>
        <position position="215"/>
    </location>
</feature>
<feature type="site" description="Required for specificity" evidence="1">
    <location>
        <position position="209"/>
    </location>
</feature>
<feature type="disulfide bond" evidence="3">
    <location>
        <begin position="59"/>
        <end position="75"/>
    </location>
</feature>
<feature type="disulfide bond" evidence="3">
    <location>
        <begin position="185"/>
        <end position="200"/>
    </location>
</feature>
<feature type="disulfide bond" evidence="3">
    <location>
        <begin position="211"/>
        <end position="235"/>
    </location>
</feature>
<feature type="sequence conflict" description="In Ref. 1; AAA17455." evidence="4" ref="1">
    <original>I</original>
    <variation>V</variation>
    <location>
        <position position="8"/>
    </location>
</feature>
<feature type="sequence conflict" description="In Ref. 1; AAA17455." evidence="4" ref="1">
    <original>S</original>
    <variation>P</variation>
    <location>
        <position position="24"/>
    </location>
</feature>
<feature type="sequence conflict" description="In Ref. 1; AAA17455." evidence="4" ref="1">
    <original>A</original>
    <variation>S</variation>
    <location>
        <position position="88"/>
    </location>
</feature>
<feature type="sequence conflict" description="In Ref. 1; AAA17455." evidence="4" ref="1">
    <original>N</original>
    <variation>Y</variation>
    <location>
        <position position="97"/>
    </location>
</feature>
<feature type="sequence conflict" description="In Ref. 1; AAA17455." evidence="4" ref="1">
    <original>K</original>
    <variation>Q</variation>
    <location>
        <position position="105"/>
    </location>
</feature>
<feature type="sequence conflict" description="In Ref. 1; AAA17455." evidence="4" ref="1">
    <original>E</original>
    <variation>V</variation>
    <location>
        <position position="142"/>
    </location>
</feature>
<feature type="sequence conflict" description="In Ref. 1; AAA17455." evidence="4" ref="1">
    <original>A</original>
    <variation>P</variation>
    <location>
        <position position="149"/>
    </location>
</feature>
<sequence>MNKVILRILAVLFLLGIYAVSAQSDGRIVGGADTSSYYTKYVVQLRRRSSSSSSYAQTCGGCILDAVTIATAAHCVYNREAENFLVVAGDDSRGGMNGVVVRVSKLIPHELYNSSTMDNDIALVVVDPPLPLDSFSTMEAIEIASEQPAVGVQATISGWGYTKENGLSSDQLQQVKVPIVDSEKCQEAYYWRPISEGMLCAGLSEGGKDACQGDSGGPLVVANKLAGIVSWGEGCARPNYPGVYANVAYYKDWIAKQRTSYV</sequence>
<keyword id="KW-1015">Disulfide bond</keyword>
<keyword id="KW-0378">Hydrolase</keyword>
<keyword id="KW-0645">Protease</keyword>
<keyword id="KW-1185">Reference proteome</keyword>
<keyword id="KW-0964">Secreted</keyword>
<keyword id="KW-0720">Serine protease</keyword>
<keyword id="KW-0732">Signal</keyword>
<keyword id="KW-0865">Zymogen</keyword>
<reference key="1">
    <citation type="journal article" date="1999" name="Mol. Biol. Evol.">
        <title>Concerted evolution within a trypsin gene cluster in Drosophila.</title>
        <authorList>
            <person name="Wang S."/>
            <person name="Magoulas C."/>
            <person name="Hickey D.A."/>
        </authorList>
    </citation>
    <scope>NUCLEOTIDE SEQUENCE [GENOMIC DNA]</scope>
    <source>
        <strain>Oregon-R</strain>
    </source>
</reference>
<reference key="2">
    <citation type="journal article" date="2000" name="Science">
        <title>The genome sequence of Drosophila melanogaster.</title>
        <authorList>
            <person name="Adams M.D."/>
            <person name="Celniker S.E."/>
            <person name="Holt R.A."/>
            <person name="Evans C.A."/>
            <person name="Gocayne J.D."/>
            <person name="Amanatides P.G."/>
            <person name="Scherer S.E."/>
            <person name="Li P.W."/>
            <person name="Hoskins R.A."/>
            <person name="Galle R.F."/>
            <person name="George R.A."/>
            <person name="Lewis S.E."/>
            <person name="Richards S."/>
            <person name="Ashburner M."/>
            <person name="Henderson S.N."/>
            <person name="Sutton G.G."/>
            <person name="Wortman J.R."/>
            <person name="Yandell M.D."/>
            <person name="Zhang Q."/>
            <person name="Chen L.X."/>
            <person name="Brandon R.C."/>
            <person name="Rogers Y.-H.C."/>
            <person name="Blazej R.G."/>
            <person name="Champe M."/>
            <person name="Pfeiffer B.D."/>
            <person name="Wan K.H."/>
            <person name="Doyle C."/>
            <person name="Baxter E.G."/>
            <person name="Helt G."/>
            <person name="Nelson C.R."/>
            <person name="Miklos G.L.G."/>
            <person name="Abril J.F."/>
            <person name="Agbayani A."/>
            <person name="An H.-J."/>
            <person name="Andrews-Pfannkoch C."/>
            <person name="Baldwin D."/>
            <person name="Ballew R.M."/>
            <person name="Basu A."/>
            <person name="Baxendale J."/>
            <person name="Bayraktaroglu L."/>
            <person name="Beasley E.M."/>
            <person name="Beeson K.Y."/>
            <person name="Benos P.V."/>
            <person name="Berman B.P."/>
            <person name="Bhandari D."/>
            <person name="Bolshakov S."/>
            <person name="Borkova D."/>
            <person name="Botchan M.R."/>
            <person name="Bouck J."/>
            <person name="Brokstein P."/>
            <person name="Brottier P."/>
            <person name="Burtis K.C."/>
            <person name="Busam D.A."/>
            <person name="Butler H."/>
            <person name="Cadieu E."/>
            <person name="Center A."/>
            <person name="Chandra I."/>
            <person name="Cherry J.M."/>
            <person name="Cawley S."/>
            <person name="Dahlke C."/>
            <person name="Davenport L.B."/>
            <person name="Davies P."/>
            <person name="de Pablos B."/>
            <person name="Delcher A."/>
            <person name="Deng Z."/>
            <person name="Mays A.D."/>
            <person name="Dew I."/>
            <person name="Dietz S.M."/>
            <person name="Dodson K."/>
            <person name="Doup L.E."/>
            <person name="Downes M."/>
            <person name="Dugan-Rocha S."/>
            <person name="Dunkov B.C."/>
            <person name="Dunn P."/>
            <person name="Durbin K.J."/>
            <person name="Evangelista C.C."/>
            <person name="Ferraz C."/>
            <person name="Ferriera S."/>
            <person name="Fleischmann W."/>
            <person name="Fosler C."/>
            <person name="Gabrielian A.E."/>
            <person name="Garg N.S."/>
            <person name="Gelbart W.M."/>
            <person name="Glasser K."/>
            <person name="Glodek A."/>
            <person name="Gong F."/>
            <person name="Gorrell J.H."/>
            <person name="Gu Z."/>
            <person name="Guan P."/>
            <person name="Harris M."/>
            <person name="Harris N.L."/>
            <person name="Harvey D.A."/>
            <person name="Heiman T.J."/>
            <person name="Hernandez J.R."/>
            <person name="Houck J."/>
            <person name="Hostin D."/>
            <person name="Houston K.A."/>
            <person name="Howland T.J."/>
            <person name="Wei M.-H."/>
            <person name="Ibegwam C."/>
            <person name="Jalali M."/>
            <person name="Kalush F."/>
            <person name="Karpen G.H."/>
            <person name="Ke Z."/>
            <person name="Kennison J.A."/>
            <person name="Ketchum K.A."/>
            <person name="Kimmel B.E."/>
            <person name="Kodira C.D."/>
            <person name="Kraft C.L."/>
            <person name="Kravitz S."/>
            <person name="Kulp D."/>
            <person name="Lai Z."/>
            <person name="Lasko P."/>
            <person name="Lei Y."/>
            <person name="Levitsky A.A."/>
            <person name="Li J.H."/>
            <person name="Li Z."/>
            <person name="Liang Y."/>
            <person name="Lin X."/>
            <person name="Liu X."/>
            <person name="Mattei B."/>
            <person name="McIntosh T.C."/>
            <person name="McLeod M.P."/>
            <person name="McPherson D."/>
            <person name="Merkulov G."/>
            <person name="Milshina N.V."/>
            <person name="Mobarry C."/>
            <person name="Morris J."/>
            <person name="Moshrefi A."/>
            <person name="Mount S.M."/>
            <person name="Moy M."/>
            <person name="Murphy B."/>
            <person name="Murphy L."/>
            <person name="Muzny D.M."/>
            <person name="Nelson D.L."/>
            <person name="Nelson D.R."/>
            <person name="Nelson K.A."/>
            <person name="Nixon K."/>
            <person name="Nusskern D.R."/>
            <person name="Pacleb J.M."/>
            <person name="Palazzolo M."/>
            <person name="Pittman G.S."/>
            <person name="Pan S."/>
            <person name="Pollard J."/>
            <person name="Puri V."/>
            <person name="Reese M.G."/>
            <person name="Reinert K."/>
            <person name="Remington K."/>
            <person name="Saunders R.D.C."/>
            <person name="Scheeler F."/>
            <person name="Shen H."/>
            <person name="Shue B.C."/>
            <person name="Siden-Kiamos I."/>
            <person name="Simpson M."/>
            <person name="Skupski M.P."/>
            <person name="Smith T.J."/>
            <person name="Spier E."/>
            <person name="Spradling A.C."/>
            <person name="Stapleton M."/>
            <person name="Strong R."/>
            <person name="Sun E."/>
            <person name="Svirskas R."/>
            <person name="Tector C."/>
            <person name="Turner R."/>
            <person name="Venter E."/>
            <person name="Wang A.H."/>
            <person name="Wang X."/>
            <person name="Wang Z.-Y."/>
            <person name="Wassarman D.A."/>
            <person name="Weinstock G.M."/>
            <person name="Weissenbach J."/>
            <person name="Williams S.M."/>
            <person name="Woodage T."/>
            <person name="Worley K.C."/>
            <person name="Wu D."/>
            <person name="Yang S."/>
            <person name="Yao Q.A."/>
            <person name="Ye J."/>
            <person name="Yeh R.-F."/>
            <person name="Zaveri J.S."/>
            <person name="Zhan M."/>
            <person name="Zhang G."/>
            <person name="Zhao Q."/>
            <person name="Zheng L."/>
            <person name="Zheng X.H."/>
            <person name="Zhong F.N."/>
            <person name="Zhong W."/>
            <person name="Zhou X."/>
            <person name="Zhu S.C."/>
            <person name="Zhu X."/>
            <person name="Smith H.O."/>
            <person name="Gibbs R.A."/>
            <person name="Myers E.W."/>
            <person name="Rubin G.M."/>
            <person name="Venter J.C."/>
        </authorList>
    </citation>
    <scope>NUCLEOTIDE SEQUENCE [LARGE SCALE GENOMIC DNA]</scope>
    <source>
        <strain>Berkeley</strain>
    </source>
</reference>
<reference key="3">
    <citation type="journal article" date="2002" name="Genome Biol.">
        <title>Annotation of the Drosophila melanogaster euchromatic genome: a systematic review.</title>
        <authorList>
            <person name="Misra S."/>
            <person name="Crosby M.A."/>
            <person name="Mungall C.J."/>
            <person name="Matthews B.B."/>
            <person name="Campbell K.S."/>
            <person name="Hradecky P."/>
            <person name="Huang Y."/>
            <person name="Kaminker J.S."/>
            <person name="Millburn G.H."/>
            <person name="Prochnik S.E."/>
            <person name="Smith C.D."/>
            <person name="Tupy J.L."/>
            <person name="Whitfield E.J."/>
            <person name="Bayraktaroglu L."/>
            <person name="Berman B.P."/>
            <person name="Bettencourt B.R."/>
            <person name="Celniker S.E."/>
            <person name="de Grey A.D.N.J."/>
            <person name="Drysdale R.A."/>
            <person name="Harris N.L."/>
            <person name="Richter J."/>
            <person name="Russo S."/>
            <person name="Schroeder A.J."/>
            <person name="Shu S.Q."/>
            <person name="Stapleton M."/>
            <person name="Yamada C."/>
            <person name="Ashburner M."/>
            <person name="Gelbart W.M."/>
            <person name="Rubin G.M."/>
            <person name="Lewis S.E."/>
        </authorList>
    </citation>
    <scope>GENOME REANNOTATION</scope>
    <source>
        <strain>Berkeley</strain>
    </source>
</reference>
<reference key="4">
    <citation type="submission" date="2004-03" db="EMBL/GenBank/DDBJ databases">
        <authorList>
            <person name="Stapleton M."/>
            <person name="Carlson J.W."/>
            <person name="Chavez C."/>
            <person name="Frise E."/>
            <person name="George R.A."/>
            <person name="Pacleb J.M."/>
            <person name="Park S."/>
            <person name="Wan K.H."/>
            <person name="Yu C."/>
            <person name="Rubin G.M."/>
            <person name="Celniker S.E."/>
        </authorList>
    </citation>
    <scope>NUCLEOTIDE SEQUENCE [LARGE SCALE MRNA] OF 5-262</scope>
    <source>
        <strain>Berkeley</strain>
        <tissue>Larva</tissue>
        <tissue>Pupae</tissue>
    </source>
</reference>
<organism>
    <name type="scientific">Drosophila melanogaster</name>
    <name type="common">Fruit fly</name>
    <dbReference type="NCBI Taxonomy" id="7227"/>
    <lineage>
        <taxon>Eukaryota</taxon>
        <taxon>Metazoa</taxon>
        <taxon>Ecdysozoa</taxon>
        <taxon>Arthropoda</taxon>
        <taxon>Hexapoda</taxon>
        <taxon>Insecta</taxon>
        <taxon>Pterygota</taxon>
        <taxon>Neoptera</taxon>
        <taxon>Endopterygota</taxon>
        <taxon>Diptera</taxon>
        <taxon>Brachycera</taxon>
        <taxon>Muscomorpha</taxon>
        <taxon>Ephydroidea</taxon>
        <taxon>Drosophilidae</taxon>
        <taxon>Drosophila</taxon>
        <taxon>Sophophora</taxon>
    </lineage>
</organism>
<dbReference type="EC" id="3.4.21.4"/>
<dbReference type="EMBL" id="U04853">
    <property type="protein sequence ID" value="AAA17455.1"/>
    <property type="molecule type" value="Genomic_DNA"/>
</dbReference>
<dbReference type="EMBL" id="AE013599">
    <property type="protein sequence ID" value="AAF58662.1"/>
    <property type="molecule type" value="Genomic_DNA"/>
</dbReference>
<dbReference type="EMBL" id="BT012306">
    <property type="protein sequence ID" value="AAS77431.1"/>
    <property type="molecule type" value="mRNA"/>
</dbReference>
<dbReference type="RefSeq" id="NP_523692.1">
    <property type="nucleotide sequence ID" value="NM_078968.2"/>
</dbReference>
<dbReference type="SMR" id="P42279"/>
<dbReference type="BioGRID" id="62010">
    <property type="interactions" value="1"/>
</dbReference>
<dbReference type="FunCoup" id="P42279">
    <property type="interactions" value="66"/>
</dbReference>
<dbReference type="STRING" id="7227.FBpp0087259"/>
<dbReference type="MEROPS" id="S01.117"/>
<dbReference type="PaxDb" id="7227-FBpp0087259"/>
<dbReference type="EnsemblMetazoa" id="FBtr0088163">
    <property type="protein sequence ID" value="FBpp0087259"/>
    <property type="gene ID" value="FBgn0011554"/>
</dbReference>
<dbReference type="GeneID" id="36217"/>
<dbReference type="KEGG" id="dme:Dmel_CG12386"/>
<dbReference type="UCSC" id="CG12386-RA">
    <property type="organism name" value="d. melanogaster"/>
</dbReference>
<dbReference type="AGR" id="FB:FBgn0011554"/>
<dbReference type="CTD" id="36217"/>
<dbReference type="FlyBase" id="FBgn0011554">
    <property type="gene designation" value="etaTry"/>
</dbReference>
<dbReference type="VEuPathDB" id="VectorBase:FBgn0011554"/>
<dbReference type="eggNOG" id="KOG3627">
    <property type="taxonomic scope" value="Eukaryota"/>
</dbReference>
<dbReference type="GeneTree" id="ENSGT00940000162823"/>
<dbReference type="HOGENOM" id="CLU_006842_7_0_1"/>
<dbReference type="InParanoid" id="P42279"/>
<dbReference type="OMA" id="NWRPITE"/>
<dbReference type="OrthoDB" id="10059102at2759"/>
<dbReference type="PhylomeDB" id="P42279"/>
<dbReference type="BioGRID-ORCS" id="36217">
    <property type="hits" value="0 hits in 1 CRISPR screen"/>
</dbReference>
<dbReference type="GenomeRNAi" id="36217"/>
<dbReference type="PRO" id="PR:P42279"/>
<dbReference type="Proteomes" id="UP000000803">
    <property type="component" value="Chromosome 2R"/>
</dbReference>
<dbReference type="Bgee" id="FBgn0011554">
    <property type="expression patterns" value="Expressed in midgut and 18 other cell types or tissues"/>
</dbReference>
<dbReference type="ExpressionAtlas" id="P42279">
    <property type="expression patterns" value="baseline and differential"/>
</dbReference>
<dbReference type="GO" id="GO:0005576">
    <property type="term" value="C:extracellular region"/>
    <property type="evidence" value="ECO:0007669"/>
    <property type="project" value="UniProtKB-SubCell"/>
</dbReference>
<dbReference type="GO" id="GO:0017171">
    <property type="term" value="F:serine hydrolase activity"/>
    <property type="evidence" value="ECO:0007005"/>
    <property type="project" value="FlyBase"/>
</dbReference>
<dbReference type="GO" id="GO:0004252">
    <property type="term" value="F:serine-type endopeptidase activity"/>
    <property type="evidence" value="ECO:0000250"/>
    <property type="project" value="FlyBase"/>
</dbReference>
<dbReference type="GO" id="GO:0006508">
    <property type="term" value="P:proteolysis"/>
    <property type="evidence" value="ECO:0000255"/>
    <property type="project" value="FlyBase"/>
</dbReference>
<dbReference type="CDD" id="cd00190">
    <property type="entry name" value="Tryp_SPc"/>
    <property type="match status" value="1"/>
</dbReference>
<dbReference type="FunFam" id="2.40.10.10:FF:000047">
    <property type="entry name" value="Trypsin eta"/>
    <property type="match status" value="1"/>
</dbReference>
<dbReference type="Gene3D" id="2.40.10.10">
    <property type="entry name" value="Trypsin-like serine proteases"/>
    <property type="match status" value="1"/>
</dbReference>
<dbReference type="InterPro" id="IPR050430">
    <property type="entry name" value="Peptidase_S1"/>
</dbReference>
<dbReference type="InterPro" id="IPR009003">
    <property type="entry name" value="Peptidase_S1_PA"/>
</dbReference>
<dbReference type="InterPro" id="IPR043504">
    <property type="entry name" value="Peptidase_S1_PA_chymotrypsin"/>
</dbReference>
<dbReference type="InterPro" id="IPR001314">
    <property type="entry name" value="Peptidase_S1A"/>
</dbReference>
<dbReference type="InterPro" id="IPR001254">
    <property type="entry name" value="Trypsin_dom"/>
</dbReference>
<dbReference type="InterPro" id="IPR033116">
    <property type="entry name" value="TRYPSIN_SER"/>
</dbReference>
<dbReference type="PANTHER" id="PTHR24276:SF91">
    <property type="entry name" value="AT26814P-RELATED"/>
    <property type="match status" value="1"/>
</dbReference>
<dbReference type="PANTHER" id="PTHR24276">
    <property type="entry name" value="POLYSERASE-RELATED"/>
    <property type="match status" value="1"/>
</dbReference>
<dbReference type="Pfam" id="PF00089">
    <property type="entry name" value="Trypsin"/>
    <property type="match status" value="1"/>
</dbReference>
<dbReference type="PRINTS" id="PR00722">
    <property type="entry name" value="CHYMOTRYPSIN"/>
</dbReference>
<dbReference type="SMART" id="SM00020">
    <property type="entry name" value="Tryp_SPc"/>
    <property type="match status" value="1"/>
</dbReference>
<dbReference type="SUPFAM" id="SSF50494">
    <property type="entry name" value="Trypsin-like serine proteases"/>
    <property type="match status" value="1"/>
</dbReference>
<dbReference type="PROSITE" id="PS50240">
    <property type="entry name" value="TRYPSIN_DOM"/>
    <property type="match status" value="1"/>
</dbReference>
<dbReference type="PROSITE" id="PS00135">
    <property type="entry name" value="TRYPSIN_SER"/>
    <property type="match status" value="1"/>
</dbReference>
<gene>
    <name type="primary">etaTry</name>
    <name type="ORF">CG12386</name>
</gene>
<name>TRYU_DROME</name>
<proteinExistence type="evidence at transcript level"/>
<comment type="catalytic activity">
    <reaction>
        <text>Preferential cleavage: Arg-|-Xaa, Lys-|-Xaa.</text>
        <dbReference type="EC" id="3.4.21.4"/>
    </reaction>
</comment>
<comment type="subcellular location">
    <subcellularLocation>
        <location>Secreted</location>
        <location>Extracellular space</location>
    </subcellularLocation>
</comment>
<comment type="similarity">
    <text evidence="3">Belongs to the peptidase S1 family.</text>
</comment>
<protein>
    <recommendedName>
        <fullName>Trypsin eta</fullName>
        <ecNumber>3.4.21.4</ecNumber>
    </recommendedName>
</protein>